<feature type="chain" id="PRO_1000138297" description="UPF0434 protein CbuK_1382">
    <location>
        <begin position="1"/>
        <end position="56"/>
    </location>
</feature>
<protein>
    <recommendedName>
        <fullName evidence="1">UPF0434 protein CbuK_1382</fullName>
    </recommendedName>
</protein>
<comment type="similarity">
    <text evidence="1">Belongs to the UPF0434 family.</text>
</comment>
<name>Y1382_COXB1</name>
<accession>B6J8F9</accession>
<gene>
    <name type="ordered locus">CbuK_1382</name>
</gene>
<sequence length="56" mass="6514">MDRRLLEILACPICKGKLVYSQDEQELICRFDKLAYPIHDGIPVMLPDSTRPLIER</sequence>
<reference key="1">
    <citation type="journal article" date="2009" name="Infect. Immun.">
        <title>Comparative genomics reveal extensive transposon-mediated genomic plasticity and diversity among potential effector proteins within the genus Coxiella.</title>
        <authorList>
            <person name="Beare P.A."/>
            <person name="Unsworth N."/>
            <person name="Andoh M."/>
            <person name="Voth D.E."/>
            <person name="Omsland A."/>
            <person name="Gilk S.D."/>
            <person name="Williams K.P."/>
            <person name="Sobral B.W."/>
            <person name="Kupko J.J. III"/>
            <person name="Porcella S.F."/>
            <person name="Samuel J.E."/>
            <person name="Heinzen R.A."/>
        </authorList>
    </citation>
    <scope>NUCLEOTIDE SEQUENCE [LARGE SCALE GENOMIC DNA]</scope>
    <source>
        <strain>CbuK_Q154</strain>
    </source>
</reference>
<evidence type="ECO:0000255" key="1">
    <source>
        <dbReference type="HAMAP-Rule" id="MF_01187"/>
    </source>
</evidence>
<proteinExistence type="inferred from homology"/>
<dbReference type="EMBL" id="CP001020">
    <property type="protein sequence ID" value="ACJ20558.1"/>
    <property type="molecule type" value="Genomic_DNA"/>
</dbReference>
<dbReference type="RefSeq" id="WP_012570821.1">
    <property type="nucleotide sequence ID" value="NC_011528.1"/>
</dbReference>
<dbReference type="SMR" id="B6J8F9"/>
<dbReference type="KEGG" id="cbc:CbuK_1382"/>
<dbReference type="HOGENOM" id="CLU_155659_3_1_6"/>
<dbReference type="GO" id="GO:0005829">
    <property type="term" value="C:cytosol"/>
    <property type="evidence" value="ECO:0007669"/>
    <property type="project" value="TreeGrafter"/>
</dbReference>
<dbReference type="FunFam" id="2.20.25.10:FF:000002">
    <property type="entry name" value="UPF0434 protein YcaR"/>
    <property type="match status" value="1"/>
</dbReference>
<dbReference type="Gene3D" id="2.20.25.10">
    <property type="match status" value="1"/>
</dbReference>
<dbReference type="HAMAP" id="MF_01187">
    <property type="entry name" value="UPF0434"/>
    <property type="match status" value="1"/>
</dbReference>
<dbReference type="InterPro" id="IPR005651">
    <property type="entry name" value="Trm112-like"/>
</dbReference>
<dbReference type="PANTHER" id="PTHR33505:SF4">
    <property type="entry name" value="PROTEIN PREY, MITOCHONDRIAL"/>
    <property type="match status" value="1"/>
</dbReference>
<dbReference type="PANTHER" id="PTHR33505">
    <property type="entry name" value="ZGC:162634"/>
    <property type="match status" value="1"/>
</dbReference>
<dbReference type="Pfam" id="PF03966">
    <property type="entry name" value="Trm112p"/>
    <property type="match status" value="1"/>
</dbReference>
<dbReference type="SUPFAM" id="SSF158997">
    <property type="entry name" value="Trm112p-like"/>
    <property type="match status" value="1"/>
</dbReference>
<organism>
    <name type="scientific">Coxiella burnetii (strain CbuK_Q154)</name>
    <name type="common">Coxiella burnetii (strain Q154)</name>
    <dbReference type="NCBI Taxonomy" id="434924"/>
    <lineage>
        <taxon>Bacteria</taxon>
        <taxon>Pseudomonadati</taxon>
        <taxon>Pseudomonadota</taxon>
        <taxon>Gammaproteobacteria</taxon>
        <taxon>Legionellales</taxon>
        <taxon>Coxiellaceae</taxon>
        <taxon>Coxiella</taxon>
    </lineage>
</organism>